<protein>
    <recommendedName>
        <fullName evidence="8">Testis-specific serine/threonine-protein kinase 3</fullName>
        <shortName>TSK-3</shortName>
        <shortName evidence="7">TSSK-3</shortName>
        <shortName evidence="7">Testis-specific kinase 3</shortName>
        <ecNumber evidence="3">2.7.11.1</ecNumber>
    </recommendedName>
    <alternativeName>
        <fullName>Serine/threonine-protein kinase 22C</fullName>
    </alternativeName>
</protein>
<name>TSSK3_HUMAN</name>
<sequence>MEDFLLSNGYQLGKTIGEGTYSKVKEAFSKKHQRKVAIKVIDKMGGPEEFIQRFLPRELQIVRTLDHKNIIQVYEMLESADGKICLVMELAEGGDVFDCVLNGGPLPESRAKALFRQMVEAIRYCHGCGVAHRDLKCENALLQGFNLKLTDFGFAKVLPKSHRELSQTFCGSTAYAAPEVLQGIPHDSKKGDVWSMGVVLYVMLCASLPFDDTDIPKMLWQQQKGVSFPTHLSISADCQDLLKRLLEPDMILRPSIEEVSWHPWLAST</sequence>
<proteinExistence type="evidence at protein level"/>
<dbReference type="EC" id="2.7.11.1" evidence="3"/>
<dbReference type="EMBL" id="AF296450">
    <property type="protein sequence ID" value="AAK97141.1"/>
    <property type="molecule type" value="mRNA"/>
</dbReference>
<dbReference type="EMBL" id="AY048701">
    <property type="protein sequence ID" value="AAL02128.1"/>
    <property type="molecule type" value="Transcribed_RNA"/>
</dbReference>
<dbReference type="EMBL" id="AL109945">
    <property type="status" value="NOT_ANNOTATED_CDS"/>
    <property type="molecule type" value="Genomic_DNA"/>
</dbReference>
<dbReference type="EMBL" id="CH471059">
    <property type="protein sequence ID" value="EAX07532.1"/>
    <property type="molecule type" value="Genomic_DNA"/>
</dbReference>
<dbReference type="EMBL" id="BC035354">
    <property type="protein sequence ID" value="AAH35354.1"/>
    <property type="molecule type" value="mRNA"/>
</dbReference>
<dbReference type="CCDS" id="CCDS362.1"/>
<dbReference type="RefSeq" id="NP_443073.1">
    <property type="nucleotide sequence ID" value="NM_052841.4"/>
</dbReference>
<dbReference type="SMR" id="Q96PN8"/>
<dbReference type="BioGRID" id="123564">
    <property type="interactions" value="80"/>
</dbReference>
<dbReference type="FunCoup" id="Q96PN8">
    <property type="interactions" value="34"/>
</dbReference>
<dbReference type="IntAct" id="Q96PN8">
    <property type="interactions" value="76"/>
</dbReference>
<dbReference type="STRING" id="9606.ENSP00000362634"/>
<dbReference type="BindingDB" id="Q96PN8"/>
<dbReference type="ChEMBL" id="CHEMBL3414416"/>
<dbReference type="iPTMnet" id="Q96PN8"/>
<dbReference type="PhosphoSitePlus" id="Q96PN8"/>
<dbReference type="BioMuta" id="TSSK3"/>
<dbReference type="DMDM" id="30316270"/>
<dbReference type="jPOST" id="Q96PN8"/>
<dbReference type="MassIVE" id="Q96PN8"/>
<dbReference type="PaxDb" id="9606-ENSP00000362634"/>
<dbReference type="PeptideAtlas" id="Q96PN8"/>
<dbReference type="ProteomicsDB" id="77723"/>
<dbReference type="Antibodypedia" id="31305">
    <property type="antibodies" value="94 antibodies from 22 providers"/>
</dbReference>
<dbReference type="DNASU" id="81629"/>
<dbReference type="Ensembl" id="ENST00000373534.4">
    <property type="protein sequence ID" value="ENSP00000362634.3"/>
    <property type="gene ID" value="ENSG00000162526.7"/>
</dbReference>
<dbReference type="GeneID" id="81629"/>
<dbReference type="KEGG" id="hsa:81629"/>
<dbReference type="MANE-Select" id="ENST00000373534.4">
    <property type="protein sequence ID" value="ENSP00000362634.3"/>
    <property type="RefSeq nucleotide sequence ID" value="NM_052841.4"/>
    <property type="RefSeq protein sequence ID" value="NP_443073.1"/>
</dbReference>
<dbReference type="UCSC" id="uc001bvf.4">
    <property type="organism name" value="human"/>
</dbReference>
<dbReference type="AGR" id="HGNC:15473"/>
<dbReference type="CTD" id="81629"/>
<dbReference type="DisGeNET" id="81629"/>
<dbReference type="GeneCards" id="TSSK3"/>
<dbReference type="HGNC" id="HGNC:15473">
    <property type="gene designation" value="TSSK3"/>
</dbReference>
<dbReference type="HPA" id="ENSG00000162526">
    <property type="expression patterns" value="Group enriched (bone marrow, testis)"/>
</dbReference>
<dbReference type="MIM" id="607660">
    <property type="type" value="gene"/>
</dbReference>
<dbReference type="neXtProt" id="NX_Q96PN8"/>
<dbReference type="OpenTargets" id="ENSG00000162526"/>
<dbReference type="PharmGKB" id="PA37964"/>
<dbReference type="VEuPathDB" id="HostDB:ENSG00000162526"/>
<dbReference type="eggNOG" id="KOG0583">
    <property type="taxonomic scope" value="Eukaryota"/>
</dbReference>
<dbReference type="GeneTree" id="ENSGT00940000161490"/>
<dbReference type="HOGENOM" id="CLU_000288_63_0_1"/>
<dbReference type="InParanoid" id="Q96PN8"/>
<dbReference type="OMA" id="HVMLCAS"/>
<dbReference type="OrthoDB" id="541276at2759"/>
<dbReference type="PAN-GO" id="Q96PN8">
    <property type="GO annotations" value="3 GO annotations based on evolutionary models"/>
</dbReference>
<dbReference type="PhylomeDB" id="Q96PN8"/>
<dbReference type="TreeFam" id="TF352374"/>
<dbReference type="PathwayCommons" id="Q96PN8"/>
<dbReference type="SignaLink" id="Q96PN8"/>
<dbReference type="SIGNOR" id="Q96PN8"/>
<dbReference type="BioGRID-ORCS" id="81629">
    <property type="hits" value="42 hits in 1190 CRISPR screens"/>
</dbReference>
<dbReference type="ChiTaRS" id="TSSK3">
    <property type="organism name" value="human"/>
</dbReference>
<dbReference type="GenomeRNAi" id="81629"/>
<dbReference type="Pharos" id="Q96PN8">
    <property type="development level" value="Tchem"/>
</dbReference>
<dbReference type="PRO" id="PR:Q96PN8"/>
<dbReference type="Proteomes" id="UP000005640">
    <property type="component" value="Chromosome 1"/>
</dbReference>
<dbReference type="RNAct" id="Q96PN8">
    <property type="molecule type" value="protein"/>
</dbReference>
<dbReference type="Bgee" id="ENSG00000162526">
    <property type="expression patterns" value="Expressed in sperm and 103 other cell types or tissues"/>
</dbReference>
<dbReference type="ExpressionAtlas" id="Q96PN8">
    <property type="expression patterns" value="baseline and differential"/>
</dbReference>
<dbReference type="GO" id="GO:0036126">
    <property type="term" value="C:sperm flagellum"/>
    <property type="evidence" value="ECO:0000250"/>
    <property type="project" value="UniProtKB"/>
</dbReference>
<dbReference type="GO" id="GO:0005524">
    <property type="term" value="F:ATP binding"/>
    <property type="evidence" value="ECO:0000250"/>
    <property type="project" value="UniProtKB"/>
</dbReference>
<dbReference type="GO" id="GO:0000287">
    <property type="term" value="F:magnesium ion binding"/>
    <property type="evidence" value="ECO:0000250"/>
    <property type="project" value="UniProtKB"/>
</dbReference>
<dbReference type="GO" id="GO:0030145">
    <property type="term" value="F:manganese ion binding"/>
    <property type="evidence" value="ECO:0007669"/>
    <property type="project" value="Ensembl"/>
</dbReference>
<dbReference type="GO" id="GO:0106310">
    <property type="term" value="F:protein serine kinase activity"/>
    <property type="evidence" value="ECO:0007669"/>
    <property type="project" value="RHEA"/>
</dbReference>
<dbReference type="GO" id="GO:0004674">
    <property type="term" value="F:protein serine/threonine kinase activity"/>
    <property type="evidence" value="ECO:0000314"/>
    <property type="project" value="UniProtKB"/>
</dbReference>
<dbReference type="GO" id="GO:0006468">
    <property type="term" value="P:protein phosphorylation"/>
    <property type="evidence" value="ECO:0000250"/>
    <property type="project" value="UniProtKB"/>
</dbReference>
<dbReference type="GO" id="GO:0007286">
    <property type="term" value="P:spermatid development"/>
    <property type="evidence" value="ECO:0000250"/>
    <property type="project" value="UniProtKB"/>
</dbReference>
<dbReference type="GO" id="GO:0007283">
    <property type="term" value="P:spermatogenesis"/>
    <property type="evidence" value="ECO:0000250"/>
    <property type="project" value="UniProtKB"/>
</dbReference>
<dbReference type="CDD" id="cd14163">
    <property type="entry name" value="STKc_TSSK3-like"/>
    <property type="match status" value="1"/>
</dbReference>
<dbReference type="FunFam" id="3.30.200.20:FF:000042">
    <property type="entry name" value="Aurora kinase A"/>
    <property type="match status" value="1"/>
</dbReference>
<dbReference type="FunFam" id="1.10.510.10:FF:000485">
    <property type="entry name" value="testis-specific serine/threonine-protein kinase 3"/>
    <property type="match status" value="1"/>
</dbReference>
<dbReference type="Gene3D" id="1.10.510.10">
    <property type="entry name" value="Transferase(Phosphotransferase) domain 1"/>
    <property type="match status" value="1"/>
</dbReference>
<dbReference type="InterPro" id="IPR011009">
    <property type="entry name" value="Kinase-like_dom_sf"/>
</dbReference>
<dbReference type="InterPro" id="IPR000719">
    <property type="entry name" value="Prot_kinase_dom"/>
</dbReference>
<dbReference type="InterPro" id="IPR017441">
    <property type="entry name" value="Protein_kinase_ATP_BS"/>
</dbReference>
<dbReference type="InterPro" id="IPR042709">
    <property type="entry name" value="TSSK3_STKc"/>
</dbReference>
<dbReference type="PANTHER" id="PTHR24346">
    <property type="entry name" value="MAP/MICROTUBULE AFFINITY-REGULATING KINASE"/>
    <property type="match status" value="1"/>
</dbReference>
<dbReference type="PANTHER" id="PTHR24346:SF102">
    <property type="entry name" value="TESTIS-SPECIFIC SERINE_THREONINE-PROTEIN KINASE 1"/>
    <property type="match status" value="1"/>
</dbReference>
<dbReference type="Pfam" id="PF00069">
    <property type="entry name" value="Pkinase"/>
    <property type="match status" value="1"/>
</dbReference>
<dbReference type="PIRSF" id="PIRSF000654">
    <property type="entry name" value="Integrin-linked_kinase"/>
    <property type="match status" value="1"/>
</dbReference>
<dbReference type="SMART" id="SM00220">
    <property type="entry name" value="S_TKc"/>
    <property type="match status" value="1"/>
</dbReference>
<dbReference type="SUPFAM" id="SSF56112">
    <property type="entry name" value="Protein kinase-like (PK-like)"/>
    <property type="match status" value="1"/>
</dbReference>
<dbReference type="PROSITE" id="PS00107">
    <property type="entry name" value="PROTEIN_KINASE_ATP"/>
    <property type="match status" value="1"/>
</dbReference>
<dbReference type="PROSITE" id="PS50011">
    <property type="entry name" value="PROTEIN_KINASE_DOM"/>
    <property type="match status" value="1"/>
</dbReference>
<keyword id="KW-0067">ATP-binding</keyword>
<keyword id="KW-0966">Cell projection</keyword>
<keyword id="KW-0969">Cilium</keyword>
<keyword id="KW-0217">Developmental protein</keyword>
<keyword id="KW-0221">Differentiation</keyword>
<keyword id="KW-0282">Flagellum</keyword>
<keyword id="KW-0418">Kinase</keyword>
<keyword id="KW-0460">Magnesium</keyword>
<keyword id="KW-0479">Metal-binding</keyword>
<keyword id="KW-0547">Nucleotide-binding</keyword>
<keyword id="KW-0597">Phosphoprotein</keyword>
<keyword id="KW-1267">Proteomics identification</keyword>
<keyword id="KW-1185">Reference proteome</keyword>
<keyword id="KW-0723">Serine/threonine-protein kinase</keyword>
<keyword id="KW-0744">Spermatogenesis</keyword>
<keyword id="KW-0808">Transferase</keyword>
<reference key="1">
    <citation type="journal article" date="2001" name="Genomics">
        <title>Cloning and chromosomal localization of a gene encoding a novel serine/threonine kinase belonging to the subfamily of testis-specific kinases.</title>
        <authorList>
            <person name="Visconti P.E."/>
            <person name="Hao Z."/>
            <person name="Purdon M.A."/>
            <person name="Stein P."/>
            <person name="Balsara B.R."/>
            <person name="Testa J.R."/>
            <person name="Herr J.C."/>
            <person name="Moss S.B."/>
            <person name="Kopf G.S."/>
        </authorList>
    </citation>
    <scope>NUCLEOTIDE SEQUENCE [MRNA]</scope>
    <source>
        <tissue>Testis</tissue>
    </source>
</reference>
<reference key="2">
    <citation type="submission" date="2001-07" db="EMBL/GenBank/DDBJ databases">
        <title>Cloning and characterization of a novel human TSSK3 gene.</title>
        <authorList>
            <person name="Mao Y."/>
            <person name="Xie Y."/>
            <person name="Jiang M."/>
        </authorList>
    </citation>
    <scope>NUCLEOTIDE SEQUENCE [MRNA]</scope>
    <source>
        <tissue>Fetal brain</tissue>
    </source>
</reference>
<reference key="3">
    <citation type="journal article" date="2006" name="Nature">
        <title>The DNA sequence and biological annotation of human chromosome 1.</title>
        <authorList>
            <person name="Gregory S.G."/>
            <person name="Barlow K.F."/>
            <person name="McLay K.E."/>
            <person name="Kaul R."/>
            <person name="Swarbreck D."/>
            <person name="Dunham A."/>
            <person name="Scott C.E."/>
            <person name="Howe K.L."/>
            <person name="Woodfine K."/>
            <person name="Spencer C.C.A."/>
            <person name="Jones M.C."/>
            <person name="Gillson C."/>
            <person name="Searle S."/>
            <person name="Zhou Y."/>
            <person name="Kokocinski F."/>
            <person name="McDonald L."/>
            <person name="Evans R."/>
            <person name="Phillips K."/>
            <person name="Atkinson A."/>
            <person name="Cooper R."/>
            <person name="Jones C."/>
            <person name="Hall R.E."/>
            <person name="Andrews T.D."/>
            <person name="Lloyd C."/>
            <person name="Ainscough R."/>
            <person name="Almeida J.P."/>
            <person name="Ambrose K.D."/>
            <person name="Anderson F."/>
            <person name="Andrew R.W."/>
            <person name="Ashwell R.I.S."/>
            <person name="Aubin K."/>
            <person name="Babbage A.K."/>
            <person name="Bagguley C.L."/>
            <person name="Bailey J."/>
            <person name="Beasley H."/>
            <person name="Bethel G."/>
            <person name="Bird C.P."/>
            <person name="Bray-Allen S."/>
            <person name="Brown J.Y."/>
            <person name="Brown A.J."/>
            <person name="Buckley D."/>
            <person name="Burton J."/>
            <person name="Bye J."/>
            <person name="Carder C."/>
            <person name="Chapman J.C."/>
            <person name="Clark S.Y."/>
            <person name="Clarke G."/>
            <person name="Clee C."/>
            <person name="Cobley V."/>
            <person name="Collier R.E."/>
            <person name="Corby N."/>
            <person name="Coville G.J."/>
            <person name="Davies J."/>
            <person name="Deadman R."/>
            <person name="Dunn M."/>
            <person name="Earthrowl M."/>
            <person name="Ellington A.G."/>
            <person name="Errington H."/>
            <person name="Frankish A."/>
            <person name="Frankland J."/>
            <person name="French L."/>
            <person name="Garner P."/>
            <person name="Garnett J."/>
            <person name="Gay L."/>
            <person name="Ghori M.R.J."/>
            <person name="Gibson R."/>
            <person name="Gilby L.M."/>
            <person name="Gillett W."/>
            <person name="Glithero R.J."/>
            <person name="Grafham D.V."/>
            <person name="Griffiths C."/>
            <person name="Griffiths-Jones S."/>
            <person name="Grocock R."/>
            <person name="Hammond S."/>
            <person name="Harrison E.S.I."/>
            <person name="Hart E."/>
            <person name="Haugen E."/>
            <person name="Heath P.D."/>
            <person name="Holmes S."/>
            <person name="Holt K."/>
            <person name="Howden P.J."/>
            <person name="Hunt A.R."/>
            <person name="Hunt S.E."/>
            <person name="Hunter G."/>
            <person name="Isherwood J."/>
            <person name="James R."/>
            <person name="Johnson C."/>
            <person name="Johnson D."/>
            <person name="Joy A."/>
            <person name="Kay M."/>
            <person name="Kershaw J.K."/>
            <person name="Kibukawa M."/>
            <person name="Kimberley A.M."/>
            <person name="King A."/>
            <person name="Knights A.J."/>
            <person name="Lad H."/>
            <person name="Laird G."/>
            <person name="Lawlor S."/>
            <person name="Leongamornlert D.A."/>
            <person name="Lloyd D.M."/>
            <person name="Loveland J."/>
            <person name="Lovell J."/>
            <person name="Lush M.J."/>
            <person name="Lyne R."/>
            <person name="Martin S."/>
            <person name="Mashreghi-Mohammadi M."/>
            <person name="Matthews L."/>
            <person name="Matthews N.S.W."/>
            <person name="McLaren S."/>
            <person name="Milne S."/>
            <person name="Mistry S."/>
            <person name="Moore M.J.F."/>
            <person name="Nickerson T."/>
            <person name="O'Dell C.N."/>
            <person name="Oliver K."/>
            <person name="Palmeiri A."/>
            <person name="Palmer S.A."/>
            <person name="Parker A."/>
            <person name="Patel D."/>
            <person name="Pearce A.V."/>
            <person name="Peck A.I."/>
            <person name="Pelan S."/>
            <person name="Phelps K."/>
            <person name="Phillimore B.J."/>
            <person name="Plumb R."/>
            <person name="Rajan J."/>
            <person name="Raymond C."/>
            <person name="Rouse G."/>
            <person name="Saenphimmachak C."/>
            <person name="Sehra H.K."/>
            <person name="Sheridan E."/>
            <person name="Shownkeen R."/>
            <person name="Sims S."/>
            <person name="Skuce C.D."/>
            <person name="Smith M."/>
            <person name="Steward C."/>
            <person name="Subramanian S."/>
            <person name="Sycamore N."/>
            <person name="Tracey A."/>
            <person name="Tromans A."/>
            <person name="Van Helmond Z."/>
            <person name="Wall M."/>
            <person name="Wallis J.M."/>
            <person name="White S."/>
            <person name="Whitehead S.L."/>
            <person name="Wilkinson J.E."/>
            <person name="Willey D.L."/>
            <person name="Williams H."/>
            <person name="Wilming L."/>
            <person name="Wray P.W."/>
            <person name="Wu Z."/>
            <person name="Coulson A."/>
            <person name="Vaudin M."/>
            <person name="Sulston J.E."/>
            <person name="Durbin R.M."/>
            <person name="Hubbard T."/>
            <person name="Wooster R."/>
            <person name="Dunham I."/>
            <person name="Carter N.P."/>
            <person name="McVean G."/>
            <person name="Ross M.T."/>
            <person name="Harrow J."/>
            <person name="Olson M.V."/>
            <person name="Beck S."/>
            <person name="Rogers J."/>
            <person name="Bentley D.R."/>
        </authorList>
    </citation>
    <scope>NUCLEOTIDE SEQUENCE [LARGE SCALE GENOMIC DNA]</scope>
</reference>
<reference key="4">
    <citation type="submission" date="2005-09" db="EMBL/GenBank/DDBJ databases">
        <authorList>
            <person name="Mural R.J."/>
            <person name="Istrail S."/>
            <person name="Sutton G.G."/>
            <person name="Florea L."/>
            <person name="Halpern A.L."/>
            <person name="Mobarry C.M."/>
            <person name="Lippert R."/>
            <person name="Walenz B."/>
            <person name="Shatkay H."/>
            <person name="Dew I."/>
            <person name="Miller J.R."/>
            <person name="Flanigan M.J."/>
            <person name="Edwards N.J."/>
            <person name="Bolanos R."/>
            <person name="Fasulo D."/>
            <person name="Halldorsson B.V."/>
            <person name="Hannenhalli S."/>
            <person name="Turner R."/>
            <person name="Yooseph S."/>
            <person name="Lu F."/>
            <person name="Nusskern D.R."/>
            <person name="Shue B.C."/>
            <person name="Zheng X.H."/>
            <person name="Zhong F."/>
            <person name="Delcher A.L."/>
            <person name="Huson D.H."/>
            <person name="Kravitz S.A."/>
            <person name="Mouchard L."/>
            <person name="Reinert K."/>
            <person name="Remington K.A."/>
            <person name="Clark A.G."/>
            <person name="Waterman M.S."/>
            <person name="Eichler E.E."/>
            <person name="Adams M.D."/>
            <person name="Hunkapiller M.W."/>
            <person name="Myers E.W."/>
            <person name="Venter J.C."/>
        </authorList>
    </citation>
    <scope>NUCLEOTIDE SEQUENCE [LARGE SCALE GENOMIC DNA]</scope>
</reference>
<reference key="5">
    <citation type="journal article" date="2004" name="Genome Res.">
        <title>The status, quality, and expansion of the NIH full-length cDNA project: the Mammalian Gene Collection (MGC).</title>
        <authorList>
            <consortium name="The MGC Project Team"/>
        </authorList>
    </citation>
    <scope>NUCLEOTIDE SEQUENCE [LARGE SCALE MRNA]</scope>
    <source>
        <tissue>Brain</tissue>
    </source>
</reference>
<reference key="6">
    <citation type="journal article" date="2007" name="Nature">
        <title>Patterns of somatic mutation in human cancer genomes.</title>
        <authorList>
            <person name="Greenman C."/>
            <person name="Stephens P."/>
            <person name="Smith R."/>
            <person name="Dalgliesh G.L."/>
            <person name="Hunter C."/>
            <person name="Bignell G."/>
            <person name="Davies H."/>
            <person name="Teague J."/>
            <person name="Butler A."/>
            <person name="Stevens C."/>
            <person name="Edkins S."/>
            <person name="O'Meara S."/>
            <person name="Vastrik I."/>
            <person name="Schmidt E.E."/>
            <person name="Avis T."/>
            <person name="Barthorpe S."/>
            <person name="Bhamra G."/>
            <person name="Buck G."/>
            <person name="Choudhury B."/>
            <person name="Clements J."/>
            <person name="Cole J."/>
            <person name="Dicks E."/>
            <person name="Forbes S."/>
            <person name="Gray K."/>
            <person name="Halliday K."/>
            <person name="Harrison R."/>
            <person name="Hills K."/>
            <person name="Hinton J."/>
            <person name="Jenkinson A."/>
            <person name="Jones D."/>
            <person name="Menzies A."/>
            <person name="Mironenko T."/>
            <person name="Perry J."/>
            <person name="Raine K."/>
            <person name="Richardson D."/>
            <person name="Shepherd R."/>
            <person name="Small A."/>
            <person name="Tofts C."/>
            <person name="Varian J."/>
            <person name="Webb T."/>
            <person name="West S."/>
            <person name="Widaa S."/>
            <person name="Yates A."/>
            <person name="Cahill D.P."/>
            <person name="Louis D.N."/>
            <person name="Goldstraw P."/>
            <person name="Nicholson A.G."/>
            <person name="Brasseur F."/>
            <person name="Looijenga L."/>
            <person name="Weber B.L."/>
            <person name="Chiew Y.-E."/>
            <person name="DeFazio A."/>
            <person name="Greaves M.F."/>
            <person name="Green A.R."/>
            <person name="Campbell P."/>
            <person name="Birney E."/>
            <person name="Easton D.F."/>
            <person name="Chenevix-Trench G."/>
            <person name="Tan M.-H."/>
            <person name="Khoo S.K."/>
            <person name="Teh B.T."/>
            <person name="Yuen S.T."/>
            <person name="Leung S.Y."/>
            <person name="Wooster R."/>
            <person name="Futreal P.A."/>
            <person name="Stratton M.R."/>
        </authorList>
    </citation>
    <scope>VARIANTS [LARGE SCALE ANALYSIS] THR-140 AND LEU-235</scope>
</reference>
<reference key="7">
    <citation type="journal article" date="2005" name="FEBS J.">
        <title>Characterization of testis-specific serine-threonine kinase 3 and its activation by phosphoinositide-dependent kinase-1-dependent signalling.</title>
        <authorList>
            <person name="Bucko-Justyna M."/>
            <person name="Lipinski L."/>
            <person name="Burgering B.M."/>
            <person name="Trzeciak L."/>
        </authorList>
    </citation>
    <scope>FUNCTION</scope>
    <scope>CATALYTIC ACTIVITY</scope>
</reference>
<gene>
    <name evidence="6 9" type="primary">TSSK3</name>
    <name type="synonym">SPOGA3</name>
    <name evidence="5" type="synonym">STK22C</name>
</gene>
<accession>Q96PN8</accession>
<accession>Q5TEE5</accession>
<comment type="function">
    <text evidence="1">Serine/threonine protein kinase required for spermatid development and male fertility.</text>
</comment>
<comment type="catalytic activity">
    <reaction evidence="3">
        <text>L-seryl-[protein] + ATP = O-phospho-L-seryl-[protein] + ADP + H(+)</text>
        <dbReference type="Rhea" id="RHEA:17989"/>
        <dbReference type="Rhea" id="RHEA-COMP:9863"/>
        <dbReference type="Rhea" id="RHEA-COMP:11604"/>
        <dbReference type="ChEBI" id="CHEBI:15378"/>
        <dbReference type="ChEBI" id="CHEBI:29999"/>
        <dbReference type="ChEBI" id="CHEBI:30616"/>
        <dbReference type="ChEBI" id="CHEBI:83421"/>
        <dbReference type="ChEBI" id="CHEBI:456216"/>
        <dbReference type="EC" id="2.7.11.1"/>
    </reaction>
    <physiologicalReaction direction="left-to-right" evidence="3">
        <dbReference type="Rhea" id="RHEA:17990"/>
    </physiologicalReaction>
</comment>
<comment type="catalytic activity">
    <reaction evidence="3">
        <text>L-threonyl-[protein] + ATP = O-phospho-L-threonyl-[protein] + ADP + H(+)</text>
        <dbReference type="Rhea" id="RHEA:46608"/>
        <dbReference type="Rhea" id="RHEA-COMP:11060"/>
        <dbReference type="Rhea" id="RHEA-COMP:11605"/>
        <dbReference type="ChEBI" id="CHEBI:15378"/>
        <dbReference type="ChEBI" id="CHEBI:30013"/>
        <dbReference type="ChEBI" id="CHEBI:30616"/>
        <dbReference type="ChEBI" id="CHEBI:61977"/>
        <dbReference type="ChEBI" id="CHEBI:456216"/>
        <dbReference type="EC" id="2.7.11.1"/>
    </reaction>
    <physiologicalReaction direction="left-to-right" evidence="3">
        <dbReference type="Rhea" id="RHEA:46609"/>
    </physiologicalReaction>
</comment>
<comment type="cofactor">
    <cofactor evidence="1">
        <name>Mg(2+)</name>
        <dbReference type="ChEBI" id="CHEBI:18420"/>
    </cofactor>
    <cofactor evidence="1">
        <name>Mn(2+)</name>
        <dbReference type="ChEBI" id="CHEBI:29035"/>
    </cofactor>
    <text evidence="1">Can use both Mg(2+) and Mn(2+) as cofactor, with a preference for Mn(2+) in vitro.</text>
</comment>
<comment type="activity regulation">
    <text evidence="1">Activated by phosphorylation on Thr-168 by PDPK1.</text>
</comment>
<comment type="interaction">
    <interactant intactId="EBI-3918381">
        <id>Q96PN8</id>
    </interactant>
    <interactant intactId="EBI-10173507">
        <id>Q6UY14-3</id>
        <label>ADAMTSL4</label>
    </interactant>
    <organismsDiffer>false</organismsDiffer>
    <experiments>3</experiments>
</comment>
<comment type="interaction">
    <interactant intactId="EBI-3918381">
        <id>Q96PN8</id>
    </interactant>
    <interactant intactId="EBI-948603">
        <id>Q03989</id>
        <label>ARID5A</label>
    </interactant>
    <organismsDiffer>false</organismsDiffer>
    <experiments>3</experiments>
</comment>
<comment type="interaction">
    <interactant intactId="EBI-3918381">
        <id>Q96PN8</id>
    </interactant>
    <interactant intactId="EBI-12811889">
        <id>Q9Y6H3</id>
        <label>ATP23</label>
    </interactant>
    <organismsDiffer>false</organismsDiffer>
    <experiments>3</experiments>
</comment>
<comment type="interaction">
    <interactant intactId="EBI-3918381">
        <id>Q96PN8</id>
    </interactant>
    <interactant intactId="EBI-739879">
        <id>Q53TS8</id>
        <label>C2CD6</label>
    </interactant>
    <organismsDiffer>false</organismsDiffer>
    <experiments>3</experiments>
</comment>
<comment type="interaction">
    <interactant intactId="EBI-3918381">
        <id>Q96PN8</id>
    </interactant>
    <interactant intactId="EBI-19948078">
        <id>Q96H22-3</id>
        <label>CENPN</label>
    </interactant>
    <organismsDiffer>false</organismsDiffer>
    <experiments>3</experiments>
</comment>
<comment type="interaction">
    <interactant intactId="EBI-3918381">
        <id>Q96PN8</id>
    </interactant>
    <interactant intactId="EBI-742054">
        <id>Q96D03</id>
        <label>DDIT4L</label>
    </interactant>
    <organismsDiffer>false</organismsDiffer>
    <experiments>4</experiments>
</comment>
<comment type="interaction">
    <interactant intactId="EBI-3918381">
        <id>Q96PN8</id>
    </interactant>
    <interactant intactId="EBI-750565">
        <id>P55039</id>
        <label>DRG2</label>
    </interactant>
    <organismsDiffer>false</organismsDiffer>
    <experiments>3</experiments>
</comment>
<comment type="interaction">
    <interactant intactId="EBI-3918381">
        <id>Q96PN8</id>
    </interactant>
    <interactant intactId="EBI-712452">
        <id>Q9BQ95</id>
        <label>ECSIT</label>
    </interactant>
    <organismsDiffer>false</organismsDiffer>
    <experiments>3</experiments>
</comment>
<comment type="interaction">
    <interactant intactId="EBI-3918381">
        <id>Q96PN8</id>
    </interactant>
    <interactant intactId="EBI-2349927">
        <id>Q5JST6</id>
        <label>EFHC2</label>
    </interactant>
    <organismsDiffer>false</organismsDiffer>
    <experiments>6</experiments>
</comment>
<comment type="interaction">
    <interactant intactId="EBI-3918381">
        <id>Q96PN8</id>
    </interactant>
    <interactant intactId="EBI-12807776">
        <id>O00167-2</id>
        <label>EYA2</label>
    </interactant>
    <organismsDiffer>false</organismsDiffer>
    <experiments>3</experiments>
</comment>
<comment type="interaction">
    <interactant intactId="EBI-3918381">
        <id>Q96PN8</id>
    </interactant>
    <interactant intactId="EBI-618309">
        <id>Q08379</id>
        <label>GOLGA2</label>
    </interactant>
    <organismsDiffer>false</organismsDiffer>
    <experiments>6</experiments>
</comment>
<comment type="interaction">
    <interactant intactId="EBI-3918381">
        <id>Q96PN8</id>
    </interactant>
    <interactant intactId="EBI-747204">
        <id>Q9UKT9</id>
        <label>IKZF3</label>
    </interactant>
    <organismsDiffer>false</organismsDiffer>
    <experiments>8</experiments>
</comment>
<comment type="interaction">
    <interactant intactId="EBI-3918381">
        <id>Q96PN8</id>
    </interactant>
    <interactant intactId="EBI-6509505">
        <id>Q0VD86</id>
        <label>INCA1</label>
    </interactant>
    <organismsDiffer>false</organismsDiffer>
    <experiments>3</experiments>
</comment>
<comment type="interaction">
    <interactant intactId="EBI-3918381">
        <id>Q96PN8</id>
    </interactant>
    <interactant intactId="EBI-2949715">
        <id>O95678</id>
        <label>KRT75</label>
    </interactant>
    <organismsDiffer>false</organismsDiffer>
    <experiments>3</experiments>
</comment>
<comment type="interaction">
    <interactant intactId="EBI-3918381">
        <id>Q96PN8</id>
    </interactant>
    <interactant intactId="EBI-11953846">
        <id>Q52LG2</id>
        <label>KRTAP13-2</label>
    </interactant>
    <organismsDiffer>false</organismsDiffer>
    <experiments>3</experiments>
</comment>
<comment type="interaction">
    <interactant intactId="EBI-3918381">
        <id>Q96PN8</id>
    </interactant>
    <interactant intactId="EBI-10241252">
        <id>Q3SY46</id>
        <label>KRTAP13-3</label>
    </interactant>
    <organismsDiffer>false</organismsDiffer>
    <experiments>3</experiments>
</comment>
<comment type="interaction">
    <interactant intactId="EBI-3918381">
        <id>Q96PN8</id>
    </interactant>
    <interactant intactId="EBI-20141748">
        <id>P52954</id>
        <label>LBX1</label>
    </interactant>
    <organismsDiffer>false</organismsDiffer>
    <experiments>3</experiments>
</comment>
<comment type="interaction">
    <interactant intactId="EBI-3918381">
        <id>Q96PN8</id>
    </interactant>
    <interactant intactId="EBI-12039345">
        <id>Q9UBR4-2</id>
        <label>LHX3</label>
    </interactant>
    <organismsDiffer>false</organismsDiffer>
    <experiments>3</experiments>
</comment>
<comment type="interaction">
    <interactant intactId="EBI-3918381">
        <id>Q96PN8</id>
    </interactant>
    <interactant intactId="EBI-11959475">
        <id>P25791-3</id>
        <label>LMO2</label>
    </interactant>
    <organismsDiffer>false</organismsDiffer>
    <experiments>3</experiments>
</comment>
<comment type="interaction">
    <interactant intactId="EBI-3918381">
        <id>Q96PN8</id>
    </interactant>
    <interactant intactId="EBI-739832">
        <id>Q8TBB1</id>
        <label>LNX1</label>
    </interactant>
    <organismsDiffer>false</organismsDiffer>
    <experiments>7</experiments>
</comment>
<comment type="interaction">
    <interactant intactId="EBI-3918381">
        <id>Q96PN8</id>
    </interactant>
    <interactant intactId="EBI-741037">
        <id>Q9BRK4</id>
        <label>LZTS2</label>
    </interactant>
    <organismsDiffer>false</organismsDiffer>
    <experiments>3</experiments>
</comment>
<comment type="interaction">
    <interactant intactId="EBI-3918381">
        <id>Q96PN8</id>
    </interactant>
    <interactant intactId="EBI-12516603">
        <id>Q8WWY6</id>
        <label>MBD3L1</label>
    </interactant>
    <organismsDiffer>false</organismsDiffer>
    <experiments>3</experiments>
</comment>
<comment type="interaction">
    <interactant intactId="EBI-3918381">
        <id>Q96PN8</id>
    </interactant>
    <interactant intactId="EBI-19944212">
        <id>A8MW99</id>
        <label>MEI4</label>
    </interactant>
    <organismsDiffer>false</organismsDiffer>
    <experiments>3</experiments>
</comment>
<comment type="interaction">
    <interactant intactId="EBI-3918381">
        <id>Q96PN8</id>
    </interactant>
    <interactant intactId="EBI-723426">
        <id>Q13084</id>
        <label>MRPL28</label>
    </interactant>
    <organismsDiffer>false</organismsDiffer>
    <experiments>3</experiments>
</comment>
<comment type="interaction">
    <interactant intactId="EBI-3918381">
        <id>Q96PN8</id>
    </interactant>
    <interactant intactId="EBI-6447480">
        <id>P35548</id>
        <label>MSX2</label>
    </interactant>
    <organismsDiffer>false</organismsDiffer>
    <experiments>3</experiments>
</comment>
<comment type="interaction">
    <interactant intactId="EBI-3918381">
        <id>Q96PN8</id>
    </interactant>
    <interactant intactId="EBI-3906629">
        <id>P15173</id>
        <label>MYOG</label>
    </interactant>
    <organismsDiffer>false</organismsDiffer>
    <experiments>3</experiments>
</comment>
<comment type="interaction">
    <interactant intactId="EBI-3918381">
        <id>Q96PN8</id>
    </interactant>
    <interactant intactId="EBI-5662487">
        <id>Q8TDC0</id>
        <label>MYOZ3</label>
    </interactant>
    <organismsDiffer>false</organismsDiffer>
    <experiments>3</experiments>
</comment>
<comment type="interaction">
    <interactant intactId="EBI-3918381">
        <id>Q96PN8</id>
    </interactant>
    <interactant intactId="EBI-10271199">
        <id>Q8NI38</id>
        <label>NFKBID</label>
    </interactant>
    <organismsDiffer>false</organismsDiffer>
    <experiments>3</experiments>
</comment>
<comment type="interaction">
    <interactant intactId="EBI-3918381">
        <id>Q96PN8</id>
    </interactant>
    <interactant intactId="EBI-744871">
        <id>O00746</id>
        <label>NME4</label>
    </interactant>
    <organismsDiffer>false</organismsDiffer>
    <experiments>3</experiments>
</comment>
<comment type="interaction">
    <interactant intactId="EBI-3918381">
        <id>Q96PN8</id>
    </interactant>
    <interactant intactId="EBI-10302990">
        <id>Q9BYU1</id>
        <label>PBX4</label>
    </interactant>
    <organismsDiffer>false</organismsDiffer>
    <experiments>3</experiments>
</comment>
<comment type="interaction">
    <interactant intactId="EBI-3918381">
        <id>Q96PN8</id>
    </interactant>
    <interactant intactId="EBI-949255">
        <id>Q58EX7</id>
        <label>PLEKHG4</label>
    </interactant>
    <organismsDiffer>false</organismsDiffer>
    <experiments>3</experiments>
</comment>
<comment type="interaction">
    <interactant intactId="EBI-3918381">
        <id>Q96PN8</id>
    </interactant>
    <interactant intactId="EBI-710402">
        <id>Q96I34</id>
        <label>PPP1R16A</label>
    </interactant>
    <organismsDiffer>false</organismsDiffer>
    <experiments>3</experiments>
</comment>
<comment type="interaction">
    <interactant intactId="EBI-3918381">
        <id>Q96PN8</id>
    </interactant>
    <interactant intactId="EBI-11320284">
        <id>Q9NQX0</id>
        <label>PRDM6</label>
    </interactant>
    <organismsDiffer>false</organismsDiffer>
    <experiments>3</experiments>
</comment>
<comment type="interaction">
    <interactant intactId="EBI-3918381">
        <id>Q96PN8</id>
    </interactant>
    <interactant intactId="EBI-2340624">
        <id>Q9BYM8</id>
        <label>RBCK1</label>
    </interactant>
    <organismsDiffer>false</organismsDiffer>
    <experiments>6</experiments>
</comment>
<comment type="interaction">
    <interactant intactId="EBI-3918381">
        <id>Q96PN8</id>
    </interactant>
    <interactant intactId="EBI-307352">
        <id>Q04864</id>
        <label>REL</label>
    </interactant>
    <organismsDiffer>false</organismsDiffer>
    <experiments>3</experiments>
</comment>
<comment type="interaction">
    <interactant intactId="EBI-3918381">
        <id>Q96PN8</id>
    </interactant>
    <interactant intactId="EBI-10829018">
        <id>Q04864-2</id>
        <label>REL</label>
    </interactant>
    <organismsDiffer>false</organismsDiffer>
    <experiments>3</experiments>
</comment>
<comment type="interaction">
    <interactant intactId="EBI-3918381">
        <id>Q96PN8</id>
    </interactant>
    <interactant intactId="EBI-6257312">
        <id>Q9BVN2</id>
        <label>RUSC1</label>
    </interactant>
    <organismsDiffer>false</organismsDiffer>
    <experiments>5</experiments>
</comment>
<comment type="interaction">
    <interactant intactId="EBI-3918381">
        <id>Q96PN8</id>
    </interactant>
    <interactant intactId="EBI-12037847">
        <id>Q6ZSJ9</id>
        <label>SHISA6</label>
    </interactant>
    <organismsDiffer>false</organismsDiffer>
    <experiments>3</experiments>
</comment>
<comment type="interaction">
    <interactant intactId="EBI-3918381">
        <id>Q96PN8</id>
    </interactant>
    <interactant intactId="EBI-10269374">
        <id>Q8ND83</id>
        <label>SLAIN1</label>
    </interactant>
    <organismsDiffer>false</organismsDiffer>
    <experiments>3</experiments>
</comment>
<comment type="interaction">
    <interactant intactId="EBI-3918381">
        <id>Q96PN8</id>
    </interactant>
    <interactant intactId="EBI-10269322">
        <id>Q8NCR6</id>
        <label>SPMIP6</label>
    </interactant>
    <organismsDiffer>false</organismsDiffer>
    <experiments>3</experiments>
</comment>
<comment type="interaction">
    <interactant intactId="EBI-3918381">
        <id>Q96PN8</id>
    </interactant>
    <interactant intactId="EBI-1186119">
        <id>P51692</id>
        <label>STAT5B</label>
    </interactant>
    <organismsDiffer>false</organismsDiffer>
    <experiments>3</experiments>
</comment>
<comment type="interaction">
    <interactant intactId="EBI-3918381">
        <id>Q96PN8</id>
    </interactant>
    <interactant intactId="EBI-2682386">
        <id>Q96PV0</id>
        <label>SYNGAP1</label>
    </interactant>
    <organismsDiffer>false</organismsDiffer>
    <experiments>3</experiments>
</comment>
<comment type="interaction">
    <interactant intactId="EBI-3918381">
        <id>Q96PN8</id>
    </interactant>
    <interactant intactId="EBI-533224">
        <id>P15884</id>
        <label>TCF4</label>
    </interactant>
    <organismsDiffer>false</organismsDiffer>
    <experiments>3</experiments>
</comment>
<comment type="interaction">
    <interactant intactId="EBI-3918381">
        <id>Q96PN8</id>
    </interactant>
    <interactant intactId="EBI-3923210">
        <id>Q8TDR4</id>
        <label>TCP10L</label>
    </interactant>
    <organismsDiffer>false</organismsDiffer>
    <experiments>3</experiments>
</comment>
<comment type="interaction">
    <interactant intactId="EBI-3918381">
        <id>Q96PN8</id>
    </interactant>
    <interactant intactId="EBI-11139477">
        <id>Q96N21</id>
        <label>TEPSIN</label>
    </interactant>
    <organismsDiffer>false</organismsDiffer>
    <experiments>3</experiments>
</comment>
<comment type="interaction">
    <interactant intactId="EBI-3918381">
        <id>Q96PN8</id>
    </interactant>
    <interactant intactId="EBI-12029034">
        <id>Q96PF1</id>
        <label>TGM7</label>
    </interactant>
    <organismsDiffer>false</organismsDiffer>
    <experiments>3</experiments>
</comment>
<comment type="interaction">
    <interactant intactId="EBI-3918381">
        <id>Q96PN8</id>
    </interactant>
    <interactant intactId="EBI-717810">
        <id>Q08117</id>
        <label>TLE5</label>
    </interactant>
    <organismsDiffer>false</organismsDiffer>
    <experiments>3</experiments>
</comment>
<comment type="interaction">
    <interactant intactId="EBI-3918381">
        <id>Q96PN8</id>
    </interactant>
    <interactant intactId="EBI-17716262">
        <id>Q9UPQ4-2</id>
        <label>TRIM35</label>
    </interactant>
    <organismsDiffer>false</organismsDiffer>
    <experiments>3</experiments>
</comment>
<comment type="interaction">
    <interactant intactId="EBI-3918381">
        <id>Q96PN8</id>
    </interactant>
    <interactant intactId="EBI-9867283">
        <id>Q86XT4</id>
        <label>TRIM50</label>
    </interactant>
    <organismsDiffer>false</organismsDiffer>
    <experiments>6</experiments>
</comment>
<comment type="interaction">
    <interactant intactId="EBI-3918381">
        <id>Q96PN8</id>
    </interactant>
    <interactant intactId="EBI-2130429">
        <id>Q9BYV2</id>
        <label>TRIM54</label>
    </interactant>
    <organismsDiffer>false</organismsDiffer>
    <experiments>3</experiments>
</comment>
<comment type="interaction">
    <interactant intactId="EBI-3918381">
        <id>Q96PN8</id>
    </interactant>
    <interactant intactId="EBI-720828">
        <id>Q9C026</id>
        <label>TRIM9</label>
    </interactant>
    <organismsDiffer>false</organismsDiffer>
    <experiments>3</experiments>
</comment>
<comment type="interaction">
    <interactant intactId="EBI-3918381">
        <id>Q96PN8</id>
    </interactant>
    <interactant intactId="EBI-742327">
        <id>Q15654</id>
        <label>TRIP6</label>
    </interactant>
    <organismsDiffer>false</organismsDiffer>
    <experiments>3</experiments>
</comment>
<comment type="interaction">
    <interactant intactId="EBI-3918381">
        <id>Q96PN8</id>
    </interactant>
    <interactant intactId="EBI-2871776">
        <id>P06132</id>
        <label>UROD</label>
    </interactant>
    <organismsDiffer>false</organismsDiffer>
    <experiments>3</experiments>
</comment>
<comment type="interaction">
    <interactant intactId="EBI-3918381">
        <id>Q96PN8</id>
    </interactant>
    <interactant intactId="EBI-11975223">
        <id>Q70EL1-9</id>
        <label>USP54</label>
    </interactant>
    <organismsDiffer>false</organismsDiffer>
    <experiments>3</experiments>
</comment>
<comment type="interaction">
    <interactant intactId="EBI-3918381">
        <id>Q96PN8</id>
    </interactant>
    <interactant intactId="EBI-11983165">
        <id>Q99990</id>
        <label>VGLL1</label>
    </interactant>
    <organismsDiffer>false</organismsDiffer>
    <experiments>3</experiments>
</comment>
<comment type="interaction">
    <interactant intactId="EBI-3918381">
        <id>Q96PN8</id>
    </interactant>
    <interactant intactId="EBI-2799833">
        <id>Q8N1B4</id>
        <label>VPS52</label>
    </interactant>
    <organismsDiffer>false</organismsDiffer>
    <experiments>6</experiments>
</comment>
<comment type="interaction">
    <interactant intactId="EBI-3918381">
        <id>Q96PN8</id>
    </interactant>
    <interactant intactId="EBI-716093">
        <id>P13994</id>
        <label>YJU2B</label>
    </interactant>
    <organismsDiffer>false</organismsDiffer>
    <experiments>3</experiments>
</comment>
<comment type="interaction">
    <interactant intactId="EBI-3918381">
        <id>Q96PN8</id>
    </interactant>
    <interactant intactId="EBI-739899">
        <id>P24278</id>
        <label>ZBTB25</label>
    </interactant>
    <organismsDiffer>false</organismsDiffer>
    <experiments>3</experiments>
</comment>
<comment type="interaction">
    <interactant intactId="EBI-3918381">
        <id>Q96PN8</id>
    </interactant>
    <interactant intactId="EBI-12030590">
        <id>Q9H0C1</id>
        <label>ZMYND12</label>
    </interactant>
    <organismsDiffer>false</organismsDiffer>
    <experiments>3</experiments>
</comment>
<comment type="subcellular location">
    <subcellularLocation>
        <location evidence="1">Cell projection</location>
        <location evidence="1">Cilium</location>
        <location evidence="1">Flagellum</location>
    </subcellularLocation>
    <text evidence="1">Localizes to the sperm flagellum in mature sperm.</text>
</comment>
<comment type="PTM">
    <text evidence="1">Autophosphorylated at Ser-166. Phosphorylation at Thr-168 by PDPK1 activates the serine/threonine protein kinase activity.</text>
</comment>
<comment type="similarity">
    <text evidence="8">Belongs to the protein kinase superfamily. CAMK Ser/Thr protein kinase family.</text>
</comment>
<organism>
    <name type="scientific">Homo sapiens</name>
    <name type="common">Human</name>
    <dbReference type="NCBI Taxonomy" id="9606"/>
    <lineage>
        <taxon>Eukaryota</taxon>
        <taxon>Metazoa</taxon>
        <taxon>Chordata</taxon>
        <taxon>Craniata</taxon>
        <taxon>Vertebrata</taxon>
        <taxon>Euteleostomi</taxon>
        <taxon>Mammalia</taxon>
        <taxon>Eutheria</taxon>
        <taxon>Euarchontoglires</taxon>
        <taxon>Primates</taxon>
        <taxon>Haplorrhini</taxon>
        <taxon>Catarrhini</taxon>
        <taxon>Hominidae</taxon>
        <taxon>Homo</taxon>
    </lineage>
</organism>
<evidence type="ECO:0000250" key="1">
    <source>
        <dbReference type="UniProtKB" id="Q9D2E1"/>
    </source>
</evidence>
<evidence type="ECO:0000255" key="2">
    <source>
        <dbReference type="PROSITE-ProRule" id="PRU00159"/>
    </source>
</evidence>
<evidence type="ECO:0000269" key="3">
    <source>
    </source>
</evidence>
<evidence type="ECO:0000269" key="4">
    <source>
    </source>
</evidence>
<evidence type="ECO:0000303" key="5">
    <source>
    </source>
</evidence>
<evidence type="ECO:0000303" key="6">
    <source>
    </source>
</evidence>
<evidence type="ECO:0000303" key="7">
    <source ref="2"/>
</evidence>
<evidence type="ECO:0000305" key="8"/>
<evidence type="ECO:0000312" key="9">
    <source>
        <dbReference type="HGNC" id="HGNC:15473"/>
    </source>
</evidence>
<feature type="chain" id="PRO_0000086770" description="Testis-specific serine/threonine-protein kinase 3">
    <location>
        <begin position="1"/>
        <end position="268"/>
    </location>
</feature>
<feature type="domain" description="Protein kinase" evidence="2">
    <location>
        <begin position="10"/>
        <end position="265"/>
    </location>
</feature>
<feature type="active site" description="Proton acceptor" evidence="2">
    <location>
        <position position="134"/>
    </location>
</feature>
<feature type="binding site" evidence="2">
    <location>
        <begin position="16"/>
        <end position="24"/>
    </location>
    <ligand>
        <name>ATP</name>
        <dbReference type="ChEBI" id="CHEBI:30616"/>
    </ligand>
</feature>
<feature type="binding site" evidence="2">
    <location>
        <position position="39"/>
    </location>
    <ligand>
        <name>ATP</name>
        <dbReference type="ChEBI" id="CHEBI:30616"/>
    </ligand>
</feature>
<feature type="modified residue" description="Phosphoserine" evidence="1">
    <location>
        <position position="166"/>
    </location>
</feature>
<feature type="modified residue" description="Phosphothreonine" evidence="1">
    <location>
        <position position="168"/>
    </location>
</feature>
<feature type="sequence variant" id="VAR_051678" description="In dbSNP:rs35508255.">
    <original>I</original>
    <variation>V</variation>
    <location>
        <position position="71"/>
    </location>
</feature>
<feature type="sequence variant" id="VAR_041245" description="In dbSNP:rs55786268." evidence="4">
    <original>A</original>
    <variation>T</variation>
    <location>
        <position position="140"/>
    </location>
</feature>
<feature type="sequence variant" id="VAR_041246" description="In dbSNP:rs35457991." evidence="4">
    <original>S</original>
    <variation>L</variation>
    <location>
        <position position="235"/>
    </location>
</feature>